<sequence>MPAYHSKFDTELKVLPLGNTNMGKLPIRTNFKGPAPQTNQDDIIDEALTYFKPNIFFREFEIKGPADRTMIYLIFYITECLRKLQKSPNKIAGQKDLHALALSHLLPIPGENGFPLNSMYKAPQSKPDEDEMRAYLQQIRQEIGARLCDLAFPDPQDRPSKWWLCFARRRFMDKGLVGQGVNL</sequence>
<organism>
    <name type="scientific">Caenorhabditis elegans</name>
    <dbReference type="NCBI Taxonomy" id="6239"/>
    <lineage>
        <taxon>Eukaryota</taxon>
        <taxon>Metazoa</taxon>
        <taxon>Ecdysozoa</taxon>
        <taxon>Nematoda</taxon>
        <taxon>Chromadorea</taxon>
        <taxon>Rhabditida</taxon>
        <taxon>Rhabditina</taxon>
        <taxon>Rhabditomorpha</taxon>
        <taxon>Rhabditoidea</taxon>
        <taxon>Rhabditidae</taxon>
        <taxon>Peloderinae</taxon>
        <taxon>Caenorhabditis</taxon>
    </lineage>
</organism>
<reference key="1">
    <citation type="journal article" date="1998" name="Science">
        <title>Genome sequence of the nematode C. elegans: a platform for investigating biology.</title>
        <authorList>
            <consortium name="The C. elegans sequencing consortium"/>
        </authorList>
    </citation>
    <scope>NUCLEOTIDE SEQUENCE [LARGE SCALE GENOMIC DNA]</scope>
    <source>
        <strain>Bristol N2</strain>
    </source>
</reference>
<keyword id="KW-0009">Actin-binding</keyword>
<keyword id="KW-0963">Cytoplasm</keyword>
<keyword id="KW-0206">Cytoskeleton</keyword>
<keyword id="KW-1185">Reference proteome</keyword>
<accession>Q9XWV3</accession>
<comment type="function">
    <text evidence="1">Functions as a component of the Arp2/3 complex which is involved in regulation of actin polymerization and together with an activating nucleation-promoting factor (NPF) mediates the formation of branched actin networks.</text>
</comment>
<comment type="subunit">
    <text evidence="1">Component of the Arp2/3 complex.</text>
</comment>
<comment type="subcellular location">
    <subcellularLocation>
        <location evidence="1">Cytoplasm</location>
        <location evidence="1">Cytoskeleton</location>
    </subcellularLocation>
</comment>
<comment type="similarity">
    <text evidence="2">Belongs to the ARPC3 family.</text>
</comment>
<evidence type="ECO:0000250" key="1"/>
<evidence type="ECO:0000305" key="2"/>
<protein>
    <recommendedName>
        <fullName>Probable actin-related protein 2/3 complex subunit 3</fullName>
    </recommendedName>
    <alternativeName>
        <fullName>Arp2/3 complex 21 kDa subunit</fullName>
        <shortName>p21-ARC</shortName>
    </alternativeName>
</protein>
<name>ARPC3_CAEEL</name>
<feature type="chain" id="PRO_0000124044" description="Probable actin-related protein 2/3 complex subunit 3">
    <location>
        <begin position="1"/>
        <end position="183"/>
    </location>
</feature>
<gene>
    <name type="primary">arx-5</name>
    <name type="ORF">Y37D8A.1</name>
</gene>
<proteinExistence type="inferred from homology"/>
<dbReference type="EMBL" id="AL032626">
    <property type="protein sequence ID" value="CAA21538.1"/>
    <property type="molecule type" value="Genomic_DNA"/>
</dbReference>
<dbReference type="PIR" id="T26637">
    <property type="entry name" value="T26637"/>
</dbReference>
<dbReference type="RefSeq" id="NP_499667.1">
    <property type="nucleotide sequence ID" value="NM_067266.4"/>
</dbReference>
<dbReference type="SMR" id="Q9XWV3"/>
<dbReference type="BioGRID" id="41872">
    <property type="interactions" value="12"/>
</dbReference>
<dbReference type="FunCoup" id="Q9XWV3">
    <property type="interactions" value="2189"/>
</dbReference>
<dbReference type="IntAct" id="Q9XWV3">
    <property type="interactions" value="1"/>
</dbReference>
<dbReference type="STRING" id="6239.Y37D8A.1.1"/>
<dbReference type="PaxDb" id="6239-Y37D8A.1"/>
<dbReference type="PeptideAtlas" id="Q9XWV3"/>
<dbReference type="EnsemblMetazoa" id="Y37D8A.1.1">
    <property type="protein sequence ID" value="Y37D8A.1.1"/>
    <property type="gene ID" value="WBGene00000203"/>
</dbReference>
<dbReference type="GeneID" id="176697"/>
<dbReference type="KEGG" id="cel:CELE_Y37D8A.1"/>
<dbReference type="UCSC" id="Y37D8A.1">
    <property type="organism name" value="c. elegans"/>
</dbReference>
<dbReference type="AGR" id="WB:WBGene00000203"/>
<dbReference type="CTD" id="176697"/>
<dbReference type="WormBase" id="Y37D8A.1">
    <property type="protein sequence ID" value="CE20206"/>
    <property type="gene ID" value="WBGene00000203"/>
    <property type="gene designation" value="arx-5"/>
</dbReference>
<dbReference type="eggNOG" id="KOG3155">
    <property type="taxonomic scope" value="Eukaryota"/>
</dbReference>
<dbReference type="GeneTree" id="ENSGT00390000018018"/>
<dbReference type="HOGENOM" id="CLU_094365_1_0_1"/>
<dbReference type="InParanoid" id="Q9XWV3"/>
<dbReference type="OMA" id="TPSKWWL"/>
<dbReference type="OrthoDB" id="200404at2759"/>
<dbReference type="PhylomeDB" id="Q9XWV3"/>
<dbReference type="Reactome" id="R-CEL-2029482">
    <property type="pathway name" value="Regulation of actin dynamics for phagocytic cup formation"/>
</dbReference>
<dbReference type="Reactome" id="R-CEL-3928662">
    <property type="pathway name" value="EPHB-mediated forward signaling"/>
</dbReference>
<dbReference type="Reactome" id="R-CEL-5663213">
    <property type="pathway name" value="RHO GTPases Activate WASPs and WAVEs"/>
</dbReference>
<dbReference type="Reactome" id="R-CEL-8856828">
    <property type="pathway name" value="Clathrin-mediated endocytosis"/>
</dbReference>
<dbReference type="PRO" id="PR:Q9XWV3"/>
<dbReference type="Proteomes" id="UP000001940">
    <property type="component" value="Chromosome III"/>
</dbReference>
<dbReference type="Bgee" id="WBGene00000203">
    <property type="expression patterns" value="Expressed in pharyngeal muscle cell (C elegans) and 4 other cell types or tissues"/>
</dbReference>
<dbReference type="GO" id="GO:0005885">
    <property type="term" value="C:Arp2/3 protein complex"/>
    <property type="evidence" value="ECO:0000318"/>
    <property type="project" value="GO_Central"/>
</dbReference>
<dbReference type="GO" id="GO:0005737">
    <property type="term" value="C:cytoplasm"/>
    <property type="evidence" value="ECO:0007005"/>
    <property type="project" value="WormBase"/>
</dbReference>
<dbReference type="GO" id="GO:0055120">
    <property type="term" value="C:striated muscle dense body"/>
    <property type="evidence" value="ECO:0007005"/>
    <property type="project" value="WormBase"/>
</dbReference>
<dbReference type="GO" id="GO:0003779">
    <property type="term" value="F:actin binding"/>
    <property type="evidence" value="ECO:0007669"/>
    <property type="project" value="UniProtKB-KW"/>
</dbReference>
<dbReference type="GO" id="GO:0034314">
    <property type="term" value="P:Arp2/3 complex-mediated actin nucleation"/>
    <property type="evidence" value="ECO:0000318"/>
    <property type="project" value="GO_Central"/>
</dbReference>
<dbReference type="GO" id="GO:0010631">
    <property type="term" value="P:epithelial cell migration"/>
    <property type="evidence" value="ECO:0000315"/>
    <property type="project" value="WormBase"/>
</dbReference>
<dbReference type="GO" id="GO:0016331">
    <property type="term" value="P:morphogenesis of embryonic epithelium"/>
    <property type="evidence" value="ECO:0000315"/>
    <property type="project" value="WormBase"/>
</dbReference>
<dbReference type="GO" id="GO:0030833">
    <property type="term" value="P:regulation of actin filament polymerization"/>
    <property type="evidence" value="ECO:0007669"/>
    <property type="project" value="InterPro"/>
</dbReference>
<dbReference type="Gene3D" id="1.10.1760.10">
    <property type="entry name" value="Actin-related protein 2/3 complex subunit 3"/>
    <property type="match status" value="1"/>
</dbReference>
<dbReference type="InterPro" id="IPR007204">
    <property type="entry name" value="ARPC3"/>
</dbReference>
<dbReference type="InterPro" id="IPR036753">
    <property type="entry name" value="ARPC3_sf"/>
</dbReference>
<dbReference type="PANTHER" id="PTHR12391">
    <property type="entry name" value="ARP2/3 COMPLEX 21 KD SUBUNIT"/>
    <property type="match status" value="1"/>
</dbReference>
<dbReference type="Pfam" id="PF04062">
    <property type="entry name" value="P21-Arc"/>
    <property type="match status" value="1"/>
</dbReference>
<dbReference type="PIRSF" id="PIRSF016315">
    <property type="entry name" value="ARP2/3_P21-Arc"/>
    <property type="match status" value="1"/>
</dbReference>
<dbReference type="SUPFAM" id="SSF69060">
    <property type="entry name" value="Arp2/3 complex 21 kDa subunit ARPC3"/>
    <property type="match status" value="1"/>
</dbReference>